<evidence type="ECO:0000255" key="1">
    <source>
        <dbReference type="HAMAP-Rule" id="MF_00068"/>
    </source>
</evidence>
<sequence>MTNDALIAALSHLVSEGRNPDTMDIDLLSSQEIVERLNQQDKQVPLAVEAVLPQIAQAVDKITAAFKQGGRLIYLGAGTSGRLGVLDASECPPTFGVSDQMVIGLIAGGKEAMFTAQEGAEDNATLGAHDLQQIDFSSKDVLVGIAASGRTPYVIGALEYANDLGATTIALSCNPDSPIAEIAQIAISPVVGPEALTGSTRLKSGTAQKLVLNMLTTASMIRLGKSYQNLMVDVRATNRKLIARAVRIVMQATDCQREEAEALLKESHNNAKLAILMHLTGMNYEQATAKLSQSDGFLRRAMEEHEE</sequence>
<keyword id="KW-0119">Carbohydrate metabolism</keyword>
<keyword id="KW-0456">Lyase</keyword>
<keyword id="KW-1185">Reference proteome</keyword>
<name>MURQ2_VIBCH</name>
<comment type="function">
    <text evidence="1">Specifically catalyzes the cleavage of the D-lactyl ether substituent of MurNAc 6-phosphate, producing GlcNAc 6-phosphate and D-lactate. Together with AnmK, is also required for the utilization of anhydro-N-acetylmuramic acid (anhMurNAc) either imported from the medium or derived from its own cell wall murein, and thus plays a role in cell wall recycling.</text>
</comment>
<comment type="catalytic activity">
    <reaction evidence="1">
        <text>N-acetyl-D-muramate 6-phosphate + H2O = N-acetyl-D-glucosamine 6-phosphate + (R)-lactate</text>
        <dbReference type="Rhea" id="RHEA:26410"/>
        <dbReference type="ChEBI" id="CHEBI:15377"/>
        <dbReference type="ChEBI" id="CHEBI:16004"/>
        <dbReference type="ChEBI" id="CHEBI:57513"/>
        <dbReference type="ChEBI" id="CHEBI:58722"/>
        <dbReference type="EC" id="4.2.1.126"/>
    </reaction>
</comment>
<comment type="pathway">
    <text evidence="1">Amino-sugar metabolism; 1,6-anhydro-N-acetylmuramate degradation.</text>
</comment>
<comment type="pathway">
    <text evidence="1">Amino-sugar metabolism; N-acetylmuramate degradation.</text>
</comment>
<comment type="pathway">
    <text evidence="1">Cell wall biogenesis; peptidoglycan recycling.</text>
</comment>
<comment type="subunit">
    <text evidence="1">Homodimer.</text>
</comment>
<comment type="miscellaneous">
    <text evidence="1">A lyase-type mechanism (elimination/hydration) is suggested for the cleavage of the lactyl ether bond of MurNAc 6-phosphate, with the formation of an alpha,beta-unsaturated aldehyde intermediate with (E)-stereochemistry, followed by the syn addition of water to give product.</text>
</comment>
<comment type="similarity">
    <text evidence="1">Belongs to the GCKR-like family. MurNAc-6-P etherase subfamily.</text>
</comment>
<organism>
    <name type="scientific">Vibrio cholerae serotype O1 (strain ATCC 39315 / El Tor Inaba N16961)</name>
    <dbReference type="NCBI Taxonomy" id="243277"/>
    <lineage>
        <taxon>Bacteria</taxon>
        <taxon>Pseudomonadati</taxon>
        <taxon>Pseudomonadota</taxon>
        <taxon>Gammaproteobacteria</taxon>
        <taxon>Vibrionales</taxon>
        <taxon>Vibrionaceae</taxon>
        <taxon>Vibrio</taxon>
    </lineage>
</organism>
<gene>
    <name evidence="1" type="primary">murQ2</name>
    <name type="ordered locus">VC_0690</name>
</gene>
<reference key="1">
    <citation type="journal article" date="2000" name="Nature">
        <title>DNA sequence of both chromosomes of the cholera pathogen Vibrio cholerae.</title>
        <authorList>
            <person name="Heidelberg J.F."/>
            <person name="Eisen J.A."/>
            <person name="Nelson W.C."/>
            <person name="Clayton R.A."/>
            <person name="Gwinn M.L."/>
            <person name="Dodson R.J."/>
            <person name="Haft D.H."/>
            <person name="Hickey E.K."/>
            <person name="Peterson J.D."/>
            <person name="Umayam L.A."/>
            <person name="Gill S.R."/>
            <person name="Nelson K.E."/>
            <person name="Read T.D."/>
            <person name="Tettelin H."/>
            <person name="Richardson D.L."/>
            <person name="Ermolaeva M.D."/>
            <person name="Vamathevan J.J."/>
            <person name="Bass S."/>
            <person name="Qin H."/>
            <person name="Dragoi I."/>
            <person name="Sellers P."/>
            <person name="McDonald L.A."/>
            <person name="Utterback T.R."/>
            <person name="Fleischmann R.D."/>
            <person name="Nierman W.C."/>
            <person name="White O."/>
            <person name="Salzberg S.L."/>
            <person name="Smith H.O."/>
            <person name="Colwell R.R."/>
            <person name="Mekalanos J.J."/>
            <person name="Venter J.C."/>
            <person name="Fraser C.M."/>
        </authorList>
    </citation>
    <scope>NUCLEOTIDE SEQUENCE [LARGE SCALE GENOMIC DNA]</scope>
    <source>
        <strain>ATCC 39315 / El Tor Inaba N16961</strain>
    </source>
</reference>
<proteinExistence type="inferred from homology"/>
<feature type="chain" id="PRO_0000214842" description="N-acetylmuramic acid 6-phosphate etherase 2">
    <location>
        <begin position="1"/>
        <end position="307"/>
    </location>
</feature>
<feature type="domain" description="SIS" evidence="1">
    <location>
        <begin position="62"/>
        <end position="225"/>
    </location>
</feature>
<feature type="active site" description="Proton donor" evidence="1">
    <location>
        <position position="90"/>
    </location>
</feature>
<feature type="active site" evidence="1">
    <location>
        <position position="121"/>
    </location>
</feature>
<dbReference type="EC" id="4.2.1.126" evidence="1"/>
<dbReference type="EMBL" id="AE003852">
    <property type="protein sequence ID" value="AAF93855.1"/>
    <property type="molecule type" value="Genomic_DNA"/>
</dbReference>
<dbReference type="PIR" id="G82291">
    <property type="entry name" value="G82291"/>
</dbReference>
<dbReference type="RefSeq" id="NP_230339.1">
    <property type="nucleotide sequence ID" value="NC_002505.1"/>
</dbReference>
<dbReference type="SMR" id="Q9KU39"/>
<dbReference type="STRING" id="243277.VC_0690"/>
<dbReference type="DNASU" id="2615479"/>
<dbReference type="EnsemblBacteria" id="AAF93855">
    <property type="protein sequence ID" value="AAF93855"/>
    <property type="gene ID" value="VC_0690"/>
</dbReference>
<dbReference type="KEGG" id="vch:VC_0690"/>
<dbReference type="PATRIC" id="fig|243277.26.peg.661"/>
<dbReference type="eggNOG" id="COG2103">
    <property type="taxonomic scope" value="Bacteria"/>
</dbReference>
<dbReference type="HOGENOM" id="CLU_049049_1_1_6"/>
<dbReference type="UniPathway" id="UPA00342"/>
<dbReference type="UniPathway" id="UPA00343"/>
<dbReference type="UniPathway" id="UPA00544"/>
<dbReference type="Proteomes" id="UP000000584">
    <property type="component" value="Chromosome 1"/>
</dbReference>
<dbReference type="GO" id="GO:0097367">
    <property type="term" value="F:carbohydrate derivative binding"/>
    <property type="evidence" value="ECO:0007669"/>
    <property type="project" value="InterPro"/>
</dbReference>
<dbReference type="GO" id="GO:0016835">
    <property type="term" value="F:carbon-oxygen lyase activity"/>
    <property type="evidence" value="ECO:0000318"/>
    <property type="project" value="GO_Central"/>
</dbReference>
<dbReference type="GO" id="GO:0016803">
    <property type="term" value="F:ether hydrolase activity"/>
    <property type="evidence" value="ECO:0000318"/>
    <property type="project" value="GO_Central"/>
</dbReference>
<dbReference type="GO" id="GO:0097175">
    <property type="term" value="P:1,6-anhydro-N-acetyl-beta-muramic acid catabolic process"/>
    <property type="evidence" value="ECO:0007669"/>
    <property type="project" value="UniProtKB-UniRule"/>
</dbReference>
<dbReference type="GO" id="GO:0046348">
    <property type="term" value="P:amino sugar catabolic process"/>
    <property type="evidence" value="ECO:0000318"/>
    <property type="project" value="GO_Central"/>
</dbReference>
<dbReference type="GO" id="GO:0097173">
    <property type="term" value="P:N-acetylmuramic acid catabolic process"/>
    <property type="evidence" value="ECO:0007669"/>
    <property type="project" value="UniProtKB-UniPathway"/>
</dbReference>
<dbReference type="GO" id="GO:0009254">
    <property type="term" value="P:peptidoglycan turnover"/>
    <property type="evidence" value="ECO:0000318"/>
    <property type="project" value="GO_Central"/>
</dbReference>
<dbReference type="CDD" id="cd05007">
    <property type="entry name" value="SIS_Etherase"/>
    <property type="match status" value="1"/>
</dbReference>
<dbReference type="FunFam" id="1.10.8.1080:FF:000001">
    <property type="entry name" value="N-acetylmuramic acid 6-phosphate etherase"/>
    <property type="match status" value="1"/>
</dbReference>
<dbReference type="FunFam" id="3.40.50.10490:FF:000014">
    <property type="entry name" value="N-acetylmuramic acid 6-phosphate etherase"/>
    <property type="match status" value="1"/>
</dbReference>
<dbReference type="Gene3D" id="1.10.8.1080">
    <property type="match status" value="1"/>
</dbReference>
<dbReference type="Gene3D" id="3.40.50.10490">
    <property type="entry name" value="Glucose-6-phosphate isomerase like protein, domain 1"/>
    <property type="match status" value="1"/>
</dbReference>
<dbReference type="HAMAP" id="MF_00068">
    <property type="entry name" value="MurQ"/>
    <property type="match status" value="1"/>
</dbReference>
<dbReference type="InterPro" id="IPR005488">
    <property type="entry name" value="Etherase_MurQ"/>
</dbReference>
<dbReference type="InterPro" id="IPR005486">
    <property type="entry name" value="Glucokinase_regulatory_CS"/>
</dbReference>
<dbReference type="InterPro" id="IPR040190">
    <property type="entry name" value="MURQ/GCKR"/>
</dbReference>
<dbReference type="InterPro" id="IPR001347">
    <property type="entry name" value="SIS_dom"/>
</dbReference>
<dbReference type="InterPro" id="IPR046348">
    <property type="entry name" value="SIS_dom_sf"/>
</dbReference>
<dbReference type="NCBIfam" id="TIGR00274">
    <property type="entry name" value="N-acetylmuramic acid 6-phosphate etherase"/>
    <property type="match status" value="1"/>
</dbReference>
<dbReference type="NCBIfam" id="NF003915">
    <property type="entry name" value="PRK05441.1"/>
    <property type="match status" value="1"/>
</dbReference>
<dbReference type="NCBIfam" id="NF009222">
    <property type="entry name" value="PRK12570.1"/>
    <property type="match status" value="1"/>
</dbReference>
<dbReference type="PANTHER" id="PTHR10088">
    <property type="entry name" value="GLUCOKINASE REGULATORY PROTEIN"/>
    <property type="match status" value="1"/>
</dbReference>
<dbReference type="PANTHER" id="PTHR10088:SF5">
    <property type="entry name" value="N-ACETYLMURAMIC ACID 6-PHOSPHATE ETHERASE"/>
    <property type="match status" value="1"/>
</dbReference>
<dbReference type="Pfam" id="PF20741">
    <property type="entry name" value="GKRP-like_C"/>
    <property type="match status" value="1"/>
</dbReference>
<dbReference type="Pfam" id="PF22645">
    <property type="entry name" value="GKRP_SIS_N"/>
    <property type="match status" value="1"/>
</dbReference>
<dbReference type="SUPFAM" id="SSF53697">
    <property type="entry name" value="SIS domain"/>
    <property type="match status" value="1"/>
</dbReference>
<dbReference type="PROSITE" id="PS01272">
    <property type="entry name" value="GCKR"/>
    <property type="match status" value="1"/>
</dbReference>
<dbReference type="PROSITE" id="PS51464">
    <property type="entry name" value="SIS"/>
    <property type="match status" value="1"/>
</dbReference>
<accession>Q9KU39</accession>
<protein>
    <recommendedName>
        <fullName evidence="1">N-acetylmuramic acid 6-phosphate etherase 2</fullName>
        <shortName evidence="1">MurNAc-6-P etherase 2</shortName>
        <ecNumber evidence="1">4.2.1.126</ecNumber>
    </recommendedName>
    <alternativeName>
        <fullName evidence="1">N-acetylmuramic acid 6-phosphate hydrolase 2</fullName>
    </alternativeName>
    <alternativeName>
        <fullName evidence="1">N-acetylmuramic acid 6-phosphate lyase 2</fullName>
    </alternativeName>
</protein>